<protein>
    <recommendedName>
        <fullName evidence="1">Ferrochelatase</fullName>
        <ecNumber evidence="1">4.98.1.1</ecNumber>
    </recommendedName>
    <alternativeName>
        <fullName evidence="1">Heme synthase</fullName>
    </alternativeName>
    <alternativeName>
        <fullName evidence="1">Protoheme ferro-lyase</fullName>
    </alternativeName>
</protein>
<evidence type="ECO:0000255" key="1">
    <source>
        <dbReference type="HAMAP-Rule" id="MF_00323"/>
    </source>
</evidence>
<comment type="function">
    <text evidence="1">Catalyzes the ferrous insertion into protoporphyrin IX.</text>
</comment>
<comment type="catalytic activity">
    <reaction evidence="1">
        <text>heme b + 2 H(+) = protoporphyrin IX + Fe(2+)</text>
        <dbReference type="Rhea" id="RHEA:22584"/>
        <dbReference type="ChEBI" id="CHEBI:15378"/>
        <dbReference type="ChEBI" id="CHEBI:29033"/>
        <dbReference type="ChEBI" id="CHEBI:57306"/>
        <dbReference type="ChEBI" id="CHEBI:60344"/>
        <dbReference type="EC" id="4.98.1.1"/>
    </reaction>
</comment>
<comment type="pathway">
    <text evidence="1">Porphyrin-containing compound metabolism; protoheme biosynthesis; protoheme from protoporphyrin-IX: step 1/1.</text>
</comment>
<comment type="subcellular location">
    <subcellularLocation>
        <location evidence="1">Cytoplasm</location>
    </subcellularLocation>
</comment>
<comment type="similarity">
    <text evidence="1">Belongs to the ferrochelatase family.</text>
</comment>
<feature type="chain" id="PRO_1000189980" description="Ferrochelatase">
    <location>
        <begin position="1"/>
        <end position="352"/>
    </location>
</feature>
<feature type="binding site" evidence="1">
    <location>
        <position position="222"/>
    </location>
    <ligand>
        <name>Fe cation</name>
        <dbReference type="ChEBI" id="CHEBI:24875"/>
    </ligand>
</feature>
<feature type="binding site" evidence="1">
    <location>
        <position position="303"/>
    </location>
    <ligand>
        <name>Fe cation</name>
        <dbReference type="ChEBI" id="CHEBI:24875"/>
    </ligand>
</feature>
<sequence>MSGTDKVRVNVSQTAQTPLHTSAKLPKVGVLLVNLGTPDGTSYGPMRRYLAEFLSDRRVIEWSRLIWYPILYGIVLNTRPRRSGRLYDRIWNHENNESPLRTYTRAQGEKLAKALSDQPNVVVDWAMRYGQPSIESITDRLLQQGCERIVIFPLYPQYSATTTATVNDKFFEALMKKRFMPAIRTVPSYEAEPVYIDALARSVEKHLATLSFKPEVILTSYHGIPKSYSDKGDPYRQQCLETTRLLRERLGLGEDEMRATFQSRFGPEEWLQPYTDETVKELAKNGVKSVAVLNPGFVADCLETVDEIGNEAAEEFLENGGENFSHIPCLNDSEEGMKVIETLVRRELLGWV</sequence>
<proteinExistence type="inferred from homology"/>
<accession>C0RK28</accession>
<keyword id="KW-0963">Cytoplasm</keyword>
<keyword id="KW-0350">Heme biosynthesis</keyword>
<keyword id="KW-0408">Iron</keyword>
<keyword id="KW-0456">Lyase</keyword>
<keyword id="KW-0479">Metal-binding</keyword>
<keyword id="KW-0627">Porphyrin biosynthesis</keyword>
<name>HEMH_BRUMB</name>
<reference key="1">
    <citation type="submission" date="2009-03" db="EMBL/GenBank/DDBJ databases">
        <title>Brucella melitensis ATCC 23457 whole genome shotgun sequencing project.</title>
        <authorList>
            <person name="Setubal J.C."/>
            <person name="Boyle S."/>
            <person name="Crasta O.R."/>
            <person name="Gillespie J.J."/>
            <person name="Kenyon R.W."/>
            <person name="Lu J."/>
            <person name="Mane S."/>
            <person name="Nagrani S."/>
            <person name="Shallom J.M."/>
            <person name="Shallom S."/>
            <person name="Shukla M."/>
            <person name="Snyder E.E."/>
            <person name="Sobral B.W."/>
            <person name="Wattam A.R."/>
            <person name="Will R."/>
            <person name="Williams K."/>
            <person name="Yoo H."/>
            <person name="Munk C."/>
            <person name="Tapia R."/>
            <person name="Han C."/>
            <person name="Detter J.C."/>
            <person name="Bruce D."/>
            <person name="Brettin T.S."/>
        </authorList>
    </citation>
    <scope>NUCLEOTIDE SEQUENCE [LARGE SCALE GENOMIC DNA]</scope>
    <source>
        <strain>ATCC 23457</strain>
    </source>
</reference>
<dbReference type="EC" id="4.98.1.1" evidence="1"/>
<dbReference type="EMBL" id="CP001489">
    <property type="protein sequence ID" value="ACO01961.1"/>
    <property type="molecule type" value="Genomic_DNA"/>
</dbReference>
<dbReference type="RefSeq" id="WP_004681236.1">
    <property type="nucleotide sequence ID" value="NC_012442.1"/>
</dbReference>
<dbReference type="SMR" id="C0RK28"/>
<dbReference type="GeneID" id="97535704"/>
<dbReference type="KEGG" id="bmi:BMEA_B0080"/>
<dbReference type="HOGENOM" id="CLU_018884_0_0_5"/>
<dbReference type="UniPathway" id="UPA00252">
    <property type="reaction ID" value="UER00325"/>
</dbReference>
<dbReference type="PRO" id="PR:C0RK28"/>
<dbReference type="Proteomes" id="UP000001748">
    <property type="component" value="Chromosome II"/>
</dbReference>
<dbReference type="GO" id="GO:0005737">
    <property type="term" value="C:cytoplasm"/>
    <property type="evidence" value="ECO:0007669"/>
    <property type="project" value="UniProtKB-SubCell"/>
</dbReference>
<dbReference type="GO" id="GO:0004325">
    <property type="term" value="F:ferrochelatase activity"/>
    <property type="evidence" value="ECO:0007669"/>
    <property type="project" value="UniProtKB-UniRule"/>
</dbReference>
<dbReference type="GO" id="GO:0046872">
    <property type="term" value="F:metal ion binding"/>
    <property type="evidence" value="ECO:0007669"/>
    <property type="project" value="UniProtKB-KW"/>
</dbReference>
<dbReference type="GO" id="GO:0006783">
    <property type="term" value="P:heme biosynthetic process"/>
    <property type="evidence" value="ECO:0007669"/>
    <property type="project" value="UniProtKB-UniRule"/>
</dbReference>
<dbReference type="CDD" id="cd00419">
    <property type="entry name" value="Ferrochelatase_C"/>
    <property type="match status" value="1"/>
</dbReference>
<dbReference type="CDD" id="cd03411">
    <property type="entry name" value="Ferrochelatase_N"/>
    <property type="match status" value="1"/>
</dbReference>
<dbReference type="FunFam" id="3.40.50.1400:FF:000002">
    <property type="entry name" value="Ferrochelatase"/>
    <property type="match status" value="1"/>
</dbReference>
<dbReference type="Gene3D" id="3.40.50.1400">
    <property type="match status" value="2"/>
</dbReference>
<dbReference type="HAMAP" id="MF_00323">
    <property type="entry name" value="Ferrochelatase"/>
    <property type="match status" value="1"/>
</dbReference>
<dbReference type="InterPro" id="IPR001015">
    <property type="entry name" value="Ferrochelatase"/>
</dbReference>
<dbReference type="InterPro" id="IPR019772">
    <property type="entry name" value="Ferrochelatase_AS"/>
</dbReference>
<dbReference type="InterPro" id="IPR033644">
    <property type="entry name" value="Ferrochelatase_C"/>
</dbReference>
<dbReference type="InterPro" id="IPR033659">
    <property type="entry name" value="Ferrochelatase_N"/>
</dbReference>
<dbReference type="NCBIfam" id="TIGR00109">
    <property type="entry name" value="hemH"/>
    <property type="match status" value="1"/>
</dbReference>
<dbReference type="PANTHER" id="PTHR11108">
    <property type="entry name" value="FERROCHELATASE"/>
    <property type="match status" value="1"/>
</dbReference>
<dbReference type="PANTHER" id="PTHR11108:SF1">
    <property type="entry name" value="FERROCHELATASE, MITOCHONDRIAL"/>
    <property type="match status" value="1"/>
</dbReference>
<dbReference type="Pfam" id="PF00762">
    <property type="entry name" value="Ferrochelatase"/>
    <property type="match status" value="1"/>
</dbReference>
<dbReference type="SUPFAM" id="SSF53800">
    <property type="entry name" value="Chelatase"/>
    <property type="match status" value="1"/>
</dbReference>
<dbReference type="PROSITE" id="PS00534">
    <property type="entry name" value="FERROCHELATASE"/>
    <property type="match status" value="1"/>
</dbReference>
<gene>
    <name evidence="1" type="primary">hemH</name>
    <name type="ordered locus">BMEA_B0080</name>
</gene>
<organism>
    <name type="scientific">Brucella melitensis biotype 2 (strain ATCC 23457)</name>
    <dbReference type="NCBI Taxonomy" id="546272"/>
    <lineage>
        <taxon>Bacteria</taxon>
        <taxon>Pseudomonadati</taxon>
        <taxon>Pseudomonadota</taxon>
        <taxon>Alphaproteobacteria</taxon>
        <taxon>Hyphomicrobiales</taxon>
        <taxon>Brucellaceae</taxon>
        <taxon>Brucella/Ochrobactrum group</taxon>
        <taxon>Brucella</taxon>
    </lineage>
</organism>